<accession>Q1IKH1</accession>
<feature type="chain" id="PRO_1000004302" description="UDP-N-acetylmuramate--L-alanine ligase">
    <location>
        <begin position="1"/>
        <end position="468"/>
    </location>
</feature>
<feature type="binding site" evidence="1">
    <location>
        <begin position="112"/>
        <end position="118"/>
    </location>
    <ligand>
        <name>ATP</name>
        <dbReference type="ChEBI" id="CHEBI:30616"/>
    </ligand>
</feature>
<reference key="1">
    <citation type="journal article" date="2009" name="Appl. Environ. Microbiol.">
        <title>Three genomes from the phylum Acidobacteria provide insight into the lifestyles of these microorganisms in soils.</title>
        <authorList>
            <person name="Ward N.L."/>
            <person name="Challacombe J.F."/>
            <person name="Janssen P.H."/>
            <person name="Henrissat B."/>
            <person name="Coutinho P.M."/>
            <person name="Wu M."/>
            <person name="Xie G."/>
            <person name="Haft D.H."/>
            <person name="Sait M."/>
            <person name="Badger J."/>
            <person name="Barabote R.D."/>
            <person name="Bradley B."/>
            <person name="Brettin T.S."/>
            <person name="Brinkac L.M."/>
            <person name="Bruce D."/>
            <person name="Creasy T."/>
            <person name="Daugherty S.C."/>
            <person name="Davidsen T.M."/>
            <person name="DeBoy R.T."/>
            <person name="Detter J.C."/>
            <person name="Dodson R.J."/>
            <person name="Durkin A.S."/>
            <person name="Ganapathy A."/>
            <person name="Gwinn-Giglio M."/>
            <person name="Han C.S."/>
            <person name="Khouri H."/>
            <person name="Kiss H."/>
            <person name="Kothari S.P."/>
            <person name="Madupu R."/>
            <person name="Nelson K.E."/>
            <person name="Nelson W.C."/>
            <person name="Paulsen I."/>
            <person name="Penn K."/>
            <person name="Ren Q."/>
            <person name="Rosovitz M.J."/>
            <person name="Selengut J.D."/>
            <person name="Shrivastava S."/>
            <person name="Sullivan S.A."/>
            <person name="Tapia R."/>
            <person name="Thompson L.S."/>
            <person name="Watkins K.L."/>
            <person name="Yang Q."/>
            <person name="Yu C."/>
            <person name="Zafar N."/>
            <person name="Zhou L."/>
            <person name="Kuske C.R."/>
        </authorList>
    </citation>
    <scope>NUCLEOTIDE SEQUENCE [LARGE SCALE GENOMIC DNA]</scope>
    <source>
        <strain>Ellin345</strain>
    </source>
</reference>
<organism>
    <name type="scientific">Koribacter versatilis (strain Ellin345)</name>
    <dbReference type="NCBI Taxonomy" id="204669"/>
    <lineage>
        <taxon>Bacteria</taxon>
        <taxon>Pseudomonadati</taxon>
        <taxon>Acidobacteriota</taxon>
        <taxon>Terriglobia</taxon>
        <taxon>Terriglobales</taxon>
        <taxon>Candidatus Korobacteraceae</taxon>
        <taxon>Candidatus Korobacter</taxon>
    </lineage>
</organism>
<dbReference type="EC" id="6.3.2.8" evidence="1"/>
<dbReference type="EMBL" id="CP000360">
    <property type="protein sequence ID" value="ABF42629.1"/>
    <property type="molecule type" value="Genomic_DNA"/>
</dbReference>
<dbReference type="RefSeq" id="WP_011524428.1">
    <property type="nucleotide sequence ID" value="NC_008009.1"/>
</dbReference>
<dbReference type="SMR" id="Q1IKH1"/>
<dbReference type="STRING" id="204669.Acid345_3628"/>
<dbReference type="EnsemblBacteria" id="ABF42629">
    <property type="protein sequence ID" value="ABF42629"/>
    <property type="gene ID" value="Acid345_3628"/>
</dbReference>
<dbReference type="KEGG" id="aba:Acid345_3628"/>
<dbReference type="eggNOG" id="COG0773">
    <property type="taxonomic scope" value="Bacteria"/>
</dbReference>
<dbReference type="HOGENOM" id="CLU_028104_2_2_0"/>
<dbReference type="OrthoDB" id="9804126at2"/>
<dbReference type="UniPathway" id="UPA00219"/>
<dbReference type="Proteomes" id="UP000002432">
    <property type="component" value="Chromosome"/>
</dbReference>
<dbReference type="GO" id="GO:0005737">
    <property type="term" value="C:cytoplasm"/>
    <property type="evidence" value="ECO:0007669"/>
    <property type="project" value="UniProtKB-SubCell"/>
</dbReference>
<dbReference type="GO" id="GO:0005524">
    <property type="term" value="F:ATP binding"/>
    <property type="evidence" value="ECO:0007669"/>
    <property type="project" value="UniProtKB-UniRule"/>
</dbReference>
<dbReference type="GO" id="GO:0008763">
    <property type="term" value="F:UDP-N-acetylmuramate-L-alanine ligase activity"/>
    <property type="evidence" value="ECO:0007669"/>
    <property type="project" value="UniProtKB-UniRule"/>
</dbReference>
<dbReference type="GO" id="GO:0051301">
    <property type="term" value="P:cell division"/>
    <property type="evidence" value="ECO:0007669"/>
    <property type="project" value="UniProtKB-KW"/>
</dbReference>
<dbReference type="GO" id="GO:0071555">
    <property type="term" value="P:cell wall organization"/>
    <property type="evidence" value="ECO:0007669"/>
    <property type="project" value="UniProtKB-KW"/>
</dbReference>
<dbReference type="GO" id="GO:0009252">
    <property type="term" value="P:peptidoglycan biosynthetic process"/>
    <property type="evidence" value="ECO:0007669"/>
    <property type="project" value="UniProtKB-UniRule"/>
</dbReference>
<dbReference type="GO" id="GO:0008360">
    <property type="term" value="P:regulation of cell shape"/>
    <property type="evidence" value="ECO:0007669"/>
    <property type="project" value="UniProtKB-KW"/>
</dbReference>
<dbReference type="Gene3D" id="3.90.190.20">
    <property type="entry name" value="Mur ligase, C-terminal domain"/>
    <property type="match status" value="1"/>
</dbReference>
<dbReference type="Gene3D" id="3.40.1190.10">
    <property type="entry name" value="Mur-like, catalytic domain"/>
    <property type="match status" value="1"/>
</dbReference>
<dbReference type="Gene3D" id="3.40.50.720">
    <property type="entry name" value="NAD(P)-binding Rossmann-like Domain"/>
    <property type="match status" value="1"/>
</dbReference>
<dbReference type="HAMAP" id="MF_00046">
    <property type="entry name" value="MurC"/>
    <property type="match status" value="1"/>
</dbReference>
<dbReference type="InterPro" id="IPR036565">
    <property type="entry name" value="Mur-like_cat_sf"/>
</dbReference>
<dbReference type="InterPro" id="IPR004101">
    <property type="entry name" value="Mur_ligase_C"/>
</dbReference>
<dbReference type="InterPro" id="IPR036615">
    <property type="entry name" value="Mur_ligase_C_dom_sf"/>
</dbReference>
<dbReference type="InterPro" id="IPR013221">
    <property type="entry name" value="Mur_ligase_cen"/>
</dbReference>
<dbReference type="InterPro" id="IPR000713">
    <property type="entry name" value="Mur_ligase_N"/>
</dbReference>
<dbReference type="InterPro" id="IPR050061">
    <property type="entry name" value="MurCDEF_pg_biosynth"/>
</dbReference>
<dbReference type="InterPro" id="IPR005758">
    <property type="entry name" value="UDP-N-AcMur_Ala_ligase_MurC"/>
</dbReference>
<dbReference type="NCBIfam" id="TIGR01082">
    <property type="entry name" value="murC"/>
    <property type="match status" value="1"/>
</dbReference>
<dbReference type="PANTHER" id="PTHR43445:SF3">
    <property type="entry name" value="UDP-N-ACETYLMURAMATE--L-ALANINE LIGASE"/>
    <property type="match status" value="1"/>
</dbReference>
<dbReference type="PANTHER" id="PTHR43445">
    <property type="entry name" value="UDP-N-ACETYLMURAMATE--L-ALANINE LIGASE-RELATED"/>
    <property type="match status" value="1"/>
</dbReference>
<dbReference type="Pfam" id="PF01225">
    <property type="entry name" value="Mur_ligase"/>
    <property type="match status" value="1"/>
</dbReference>
<dbReference type="Pfam" id="PF02875">
    <property type="entry name" value="Mur_ligase_C"/>
    <property type="match status" value="1"/>
</dbReference>
<dbReference type="Pfam" id="PF08245">
    <property type="entry name" value="Mur_ligase_M"/>
    <property type="match status" value="1"/>
</dbReference>
<dbReference type="SUPFAM" id="SSF51984">
    <property type="entry name" value="MurCD N-terminal domain"/>
    <property type="match status" value="1"/>
</dbReference>
<dbReference type="SUPFAM" id="SSF53623">
    <property type="entry name" value="MurD-like peptide ligases, catalytic domain"/>
    <property type="match status" value="1"/>
</dbReference>
<dbReference type="SUPFAM" id="SSF53244">
    <property type="entry name" value="MurD-like peptide ligases, peptide-binding domain"/>
    <property type="match status" value="1"/>
</dbReference>
<gene>
    <name evidence="1" type="primary">murC</name>
    <name type="ordered locus">Acid345_3628</name>
</gene>
<sequence length="468" mass="51112">MFAKLQRIHFVGIGGIGMSGIAEVLLNLGYKVSGSDLKPSAVTERLESLGAKVFEGHRASNVEGAEVVVTSSAIDSRNPEVAEAHANHIPVIQRAEMLAELMRLKYGIAIAGMHGKTTTTSMVAAVLAGGELDPTVIVGGRVDAMGSNARLGKSHYLVAEADESDRSFLKLWFIHAVVTNIDREHMDTYHDMEDVERTFVEFMDRVPFYGMVVACNDNEPLRAILPRVRRRIVTYGTTEGSDFLIRCVPCDSEQLLLGFLNRFSVEYRGKSLGEFLLRVPGLHNVRNATAAIAIGVGLDIPADKIRAALAEFRGVDRRFQLKGKANDISVIDDYGHHPTEIRATLAAAKQCGFRHIHVVFQPHRYTRTRDLMDEFASSFGDADSLYLLDIYPASEQPIEGVNTEALARRITEVSGRATFYAKSFQVAAIMAATAAEPGDMILTLGAGNVSQLGPQILERLSAKKVAAE</sequence>
<evidence type="ECO:0000255" key="1">
    <source>
        <dbReference type="HAMAP-Rule" id="MF_00046"/>
    </source>
</evidence>
<proteinExistence type="inferred from homology"/>
<keyword id="KW-0067">ATP-binding</keyword>
<keyword id="KW-0131">Cell cycle</keyword>
<keyword id="KW-0132">Cell division</keyword>
<keyword id="KW-0133">Cell shape</keyword>
<keyword id="KW-0961">Cell wall biogenesis/degradation</keyword>
<keyword id="KW-0963">Cytoplasm</keyword>
<keyword id="KW-0436">Ligase</keyword>
<keyword id="KW-0547">Nucleotide-binding</keyword>
<keyword id="KW-0573">Peptidoglycan synthesis</keyword>
<keyword id="KW-1185">Reference proteome</keyword>
<name>MURC_KORVE</name>
<protein>
    <recommendedName>
        <fullName evidence="1">UDP-N-acetylmuramate--L-alanine ligase</fullName>
        <ecNumber evidence="1">6.3.2.8</ecNumber>
    </recommendedName>
    <alternativeName>
        <fullName evidence="1">UDP-N-acetylmuramoyl-L-alanine synthetase</fullName>
    </alternativeName>
</protein>
<comment type="function">
    <text evidence="1">Cell wall formation.</text>
</comment>
<comment type="catalytic activity">
    <reaction evidence="1">
        <text>UDP-N-acetyl-alpha-D-muramate + L-alanine + ATP = UDP-N-acetyl-alpha-D-muramoyl-L-alanine + ADP + phosphate + H(+)</text>
        <dbReference type="Rhea" id="RHEA:23372"/>
        <dbReference type="ChEBI" id="CHEBI:15378"/>
        <dbReference type="ChEBI" id="CHEBI:30616"/>
        <dbReference type="ChEBI" id="CHEBI:43474"/>
        <dbReference type="ChEBI" id="CHEBI:57972"/>
        <dbReference type="ChEBI" id="CHEBI:70757"/>
        <dbReference type="ChEBI" id="CHEBI:83898"/>
        <dbReference type="ChEBI" id="CHEBI:456216"/>
        <dbReference type="EC" id="6.3.2.8"/>
    </reaction>
</comment>
<comment type="pathway">
    <text evidence="1">Cell wall biogenesis; peptidoglycan biosynthesis.</text>
</comment>
<comment type="subcellular location">
    <subcellularLocation>
        <location evidence="1">Cytoplasm</location>
    </subcellularLocation>
</comment>
<comment type="similarity">
    <text evidence="1">Belongs to the MurCDEF family.</text>
</comment>